<organism>
    <name type="scientific">Bacillus subtilis (strain 168)</name>
    <dbReference type="NCBI Taxonomy" id="224308"/>
    <lineage>
        <taxon>Bacteria</taxon>
        <taxon>Bacillati</taxon>
        <taxon>Bacillota</taxon>
        <taxon>Bacilli</taxon>
        <taxon>Bacillales</taxon>
        <taxon>Bacillaceae</taxon>
        <taxon>Bacillus</taxon>
    </lineage>
</organism>
<sequence length="272" mass="30183">MIKKAIIPAGGFGTRNLPVTKVIPKEMFPVGSKPVIHYLVEELKESGIEDILMVVSSHKNLIVDYFDSSLALEAFLASKNKLHLLREHPIPDIRIHYVRQPYAKGLGDAISFGKQFAGGEPFAVVLPDDLIFSANQPALGQLIEAYTKYQSSVIGLKETKTEDLHHYGVIKGEPVEKGLYRIQDIVEKPKQNPPSHFAAAGRYIFTPDIFNELEALEADSGGEVQVTDAIKASLGACTVYGKLLEGERYDIGLQKDYLKLIYDMLKTEKNPQ</sequence>
<comment type="catalytic activity">
    <reaction>
        <text>alpha-D-glucose 1-phosphate + UTP + H(+) = UDP-alpha-D-glucose + diphosphate</text>
        <dbReference type="Rhea" id="RHEA:19889"/>
        <dbReference type="ChEBI" id="CHEBI:15378"/>
        <dbReference type="ChEBI" id="CHEBI:33019"/>
        <dbReference type="ChEBI" id="CHEBI:46398"/>
        <dbReference type="ChEBI" id="CHEBI:58601"/>
        <dbReference type="ChEBI" id="CHEBI:58885"/>
        <dbReference type="EC" id="2.7.7.9"/>
    </reaction>
</comment>
<comment type="similarity">
    <text evidence="1">Belongs to the UDPGP type 2 family.</text>
</comment>
<evidence type="ECO:0000305" key="1"/>
<reference key="1">
    <citation type="submission" date="1995-01" db="EMBL/GenBank/DDBJ databases">
        <authorList>
            <person name="Qin X."/>
            <person name="Taber H.W."/>
        </authorList>
    </citation>
    <scope>NUCLEOTIDE SEQUENCE [GENOMIC DNA]</scope>
    <source>
        <strain>168 / RB1</strain>
    </source>
</reference>
<reference key="2">
    <citation type="journal article" date="1997" name="Microbiology">
        <title>Sequencing and functional annotation of the Bacillus subtilis genes in the 200 kb rrnB-dnaB region.</title>
        <authorList>
            <person name="Lapidus A."/>
            <person name="Galleron N."/>
            <person name="Sorokin A."/>
            <person name="Ehrlich S.D."/>
        </authorList>
    </citation>
    <scope>NUCLEOTIDE SEQUENCE [GENOMIC DNA]</scope>
    <source>
        <strain>168</strain>
    </source>
</reference>
<reference key="3">
    <citation type="journal article" date="1997" name="Nature">
        <title>The complete genome sequence of the Gram-positive bacterium Bacillus subtilis.</title>
        <authorList>
            <person name="Kunst F."/>
            <person name="Ogasawara N."/>
            <person name="Moszer I."/>
            <person name="Albertini A.M."/>
            <person name="Alloni G."/>
            <person name="Azevedo V."/>
            <person name="Bertero M.G."/>
            <person name="Bessieres P."/>
            <person name="Bolotin A."/>
            <person name="Borchert S."/>
            <person name="Borriss R."/>
            <person name="Boursier L."/>
            <person name="Brans A."/>
            <person name="Braun M."/>
            <person name="Brignell S.C."/>
            <person name="Bron S."/>
            <person name="Brouillet S."/>
            <person name="Bruschi C.V."/>
            <person name="Caldwell B."/>
            <person name="Capuano V."/>
            <person name="Carter N.M."/>
            <person name="Choi S.-K."/>
            <person name="Codani J.-J."/>
            <person name="Connerton I.F."/>
            <person name="Cummings N.J."/>
            <person name="Daniel R.A."/>
            <person name="Denizot F."/>
            <person name="Devine K.M."/>
            <person name="Duesterhoeft A."/>
            <person name="Ehrlich S.D."/>
            <person name="Emmerson P.T."/>
            <person name="Entian K.-D."/>
            <person name="Errington J."/>
            <person name="Fabret C."/>
            <person name="Ferrari E."/>
            <person name="Foulger D."/>
            <person name="Fritz C."/>
            <person name="Fujita M."/>
            <person name="Fujita Y."/>
            <person name="Fuma S."/>
            <person name="Galizzi A."/>
            <person name="Galleron N."/>
            <person name="Ghim S.-Y."/>
            <person name="Glaser P."/>
            <person name="Goffeau A."/>
            <person name="Golightly E.J."/>
            <person name="Grandi G."/>
            <person name="Guiseppi G."/>
            <person name="Guy B.J."/>
            <person name="Haga K."/>
            <person name="Haiech J."/>
            <person name="Harwood C.R."/>
            <person name="Henaut A."/>
            <person name="Hilbert H."/>
            <person name="Holsappel S."/>
            <person name="Hosono S."/>
            <person name="Hullo M.-F."/>
            <person name="Itaya M."/>
            <person name="Jones L.-M."/>
            <person name="Joris B."/>
            <person name="Karamata D."/>
            <person name="Kasahara Y."/>
            <person name="Klaerr-Blanchard M."/>
            <person name="Klein C."/>
            <person name="Kobayashi Y."/>
            <person name="Koetter P."/>
            <person name="Koningstein G."/>
            <person name="Krogh S."/>
            <person name="Kumano M."/>
            <person name="Kurita K."/>
            <person name="Lapidus A."/>
            <person name="Lardinois S."/>
            <person name="Lauber J."/>
            <person name="Lazarevic V."/>
            <person name="Lee S.-M."/>
            <person name="Levine A."/>
            <person name="Liu H."/>
            <person name="Masuda S."/>
            <person name="Mauel C."/>
            <person name="Medigue C."/>
            <person name="Medina N."/>
            <person name="Mellado R.P."/>
            <person name="Mizuno M."/>
            <person name="Moestl D."/>
            <person name="Nakai S."/>
            <person name="Noback M."/>
            <person name="Noone D."/>
            <person name="O'Reilly M."/>
            <person name="Ogawa K."/>
            <person name="Ogiwara A."/>
            <person name="Oudega B."/>
            <person name="Park S.-H."/>
            <person name="Parro V."/>
            <person name="Pohl T.M."/>
            <person name="Portetelle D."/>
            <person name="Porwollik S."/>
            <person name="Prescott A.M."/>
            <person name="Presecan E."/>
            <person name="Pujic P."/>
            <person name="Purnelle B."/>
            <person name="Rapoport G."/>
            <person name="Rey M."/>
            <person name="Reynolds S."/>
            <person name="Rieger M."/>
            <person name="Rivolta C."/>
            <person name="Rocha E."/>
            <person name="Roche B."/>
            <person name="Rose M."/>
            <person name="Sadaie Y."/>
            <person name="Sato T."/>
            <person name="Scanlan E."/>
            <person name="Schleich S."/>
            <person name="Schroeter R."/>
            <person name="Scoffone F."/>
            <person name="Sekiguchi J."/>
            <person name="Sekowska A."/>
            <person name="Seror S.J."/>
            <person name="Serror P."/>
            <person name="Shin B.-S."/>
            <person name="Soldo B."/>
            <person name="Sorokin A."/>
            <person name="Tacconi E."/>
            <person name="Takagi T."/>
            <person name="Takahashi H."/>
            <person name="Takemaru K."/>
            <person name="Takeuchi M."/>
            <person name="Tamakoshi A."/>
            <person name="Tanaka T."/>
            <person name="Terpstra P."/>
            <person name="Tognoni A."/>
            <person name="Tosato V."/>
            <person name="Uchiyama S."/>
            <person name="Vandenbol M."/>
            <person name="Vannier F."/>
            <person name="Vassarotti A."/>
            <person name="Viari A."/>
            <person name="Wambutt R."/>
            <person name="Wedler E."/>
            <person name="Wedler H."/>
            <person name="Weitzenegger T."/>
            <person name="Winters P."/>
            <person name="Wipat A."/>
            <person name="Yamamoto H."/>
            <person name="Yamane K."/>
            <person name="Yasumoto K."/>
            <person name="Yata K."/>
            <person name="Yoshida K."/>
            <person name="Yoshikawa H.-F."/>
            <person name="Zumstein E."/>
            <person name="Yoshikawa H."/>
            <person name="Danchin A."/>
        </authorList>
    </citation>
    <scope>NUCLEOTIDE SEQUENCE [LARGE SCALE GENOMIC DNA]</scope>
    <source>
        <strain>168</strain>
    </source>
</reference>
<protein>
    <recommendedName>
        <fullName>Putative UTP--glucose-1-phosphate uridylyltransferase</fullName>
        <ecNumber>2.7.7.9</ecNumber>
    </recommendedName>
    <alternativeName>
        <fullName>Alpha-D-glucosyl-1-phosphate uridylyltransferase</fullName>
    </alternativeName>
    <alternativeName>
        <fullName>UDP-glucose pyrophosphorylase</fullName>
        <shortName>UDPGP</shortName>
    </alternativeName>
    <alternativeName>
        <fullName>Uridine diphosphoglucose pyrophosphorylase</fullName>
    </alternativeName>
</protein>
<accession>P42407</accession>
<proteinExistence type="inferred from homology"/>
<keyword id="KW-0548">Nucleotidyltransferase</keyword>
<keyword id="KW-1185">Reference proteome</keyword>
<keyword id="KW-0808">Transferase</keyword>
<feature type="chain" id="PRO_0000201376" description="Putative UTP--glucose-1-phosphate uridylyltransferase">
    <location>
        <begin position="1"/>
        <end position="272"/>
    </location>
</feature>
<dbReference type="EC" id="2.7.7.9"/>
<dbReference type="EMBL" id="U20447">
    <property type="protein sequence ID" value="AAA62287.1"/>
    <property type="molecule type" value="Genomic_DNA"/>
</dbReference>
<dbReference type="EMBL" id="AF008220">
    <property type="protein sequence ID" value="AAC00222.1"/>
    <property type="molecule type" value="Genomic_DNA"/>
</dbReference>
<dbReference type="EMBL" id="AL009126">
    <property type="protein sequence ID" value="CAB15063.1"/>
    <property type="molecule type" value="Genomic_DNA"/>
</dbReference>
<dbReference type="PIR" id="A69990">
    <property type="entry name" value="A69990"/>
</dbReference>
<dbReference type="RefSeq" id="NP_390963.1">
    <property type="nucleotide sequence ID" value="NC_000964.3"/>
</dbReference>
<dbReference type="RefSeq" id="WP_003229044.1">
    <property type="nucleotide sequence ID" value="NZ_OZ025638.1"/>
</dbReference>
<dbReference type="SMR" id="P42407"/>
<dbReference type="FunCoup" id="P42407">
    <property type="interactions" value="345"/>
</dbReference>
<dbReference type="STRING" id="224308.BSU30850"/>
<dbReference type="PaxDb" id="224308-BSU30850"/>
<dbReference type="EnsemblBacteria" id="CAB15063">
    <property type="protein sequence ID" value="CAB15063"/>
    <property type="gene ID" value="BSU_30850"/>
</dbReference>
<dbReference type="GeneID" id="937119"/>
<dbReference type="KEGG" id="bsu:BSU30850"/>
<dbReference type="PATRIC" id="fig|224308.179.peg.3344"/>
<dbReference type="eggNOG" id="COG1210">
    <property type="taxonomic scope" value="Bacteria"/>
</dbReference>
<dbReference type="InParanoid" id="P42407"/>
<dbReference type="OrthoDB" id="9803871at2"/>
<dbReference type="PhylomeDB" id="P42407"/>
<dbReference type="BioCyc" id="BSUB:BSU30850-MONOMER"/>
<dbReference type="Proteomes" id="UP000001570">
    <property type="component" value="Chromosome"/>
</dbReference>
<dbReference type="GO" id="GO:0003983">
    <property type="term" value="F:UTP:glucose-1-phosphate uridylyltransferase activity"/>
    <property type="evidence" value="ECO:0007669"/>
    <property type="project" value="UniProtKB-EC"/>
</dbReference>
<dbReference type="GO" id="GO:0009058">
    <property type="term" value="P:biosynthetic process"/>
    <property type="evidence" value="ECO:0007669"/>
    <property type="project" value="InterPro"/>
</dbReference>
<dbReference type="GO" id="GO:0006011">
    <property type="term" value="P:UDP-alpha-D-glucose metabolic process"/>
    <property type="evidence" value="ECO:0007669"/>
    <property type="project" value="InterPro"/>
</dbReference>
<dbReference type="CDD" id="cd02541">
    <property type="entry name" value="UGPase_prokaryotic"/>
    <property type="match status" value="1"/>
</dbReference>
<dbReference type="Gene3D" id="3.90.550.10">
    <property type="entry name" value="Spore Coat Polysaccharide Biosynthesis Protein SpsA, Chain A"/>
    <property type="match status" value="1"/>
</dbReference>
<dbReference type="InterPro" id="IPR005771">
    <property type="entry name" value="GalU_uridylyltTrfase_bac/arc"/>
</dbReference>
<dbReference type="InterPro" id="IPR005835">
    <property type="entry name" value="NTP_transferase_dom"/>
</dbReference>
<dbReference type="InterPro" id="IPR029044">
    <property type="entry name" value="Nucleotide-diphossugar_trans"/>
</dbReference>
<dbReference type="PANTHER" id="PTHR43197">
    <property type="entry name" value="UTP--GLUCOSE-1-PHOSPHATE URIDYLYLTRANSFERASE"/>
    <property type="match status" value="1"/>
</dbReference>
<dbReference type="PANTHER" id="PTHR43197:SF1">
    <property type="entry name" value="UTP--GLUCOSE-1-PHOSPHATE URIDYLYLTRANSFERASE"/>
    <property type="match status" value="1"/>
</dbReference>
<dbReference type="Pfam" id="PF00483">
    <property type="entry name" value="NTP_transferase"/>
    <property type="match status" value="1"/>
</dbReference>
<dbReference type="SUPFAM" id="SSF53448">
    <property type="entry name" value="Nucleotide-diphospho-sugar transferases"/>
    <property type="match status" value="1"/>
</dbReference>
<gene>
    <name type="primary">ytdA</name>
    <name type="synonym">yzwA</name>
    <name type="ordered locus">BSU30850</name>
</gene>
<name>YTDA_BACSU</name>